<comment type="subunit">
    <text evidence="1">Part of the 50S ribosomal subunit. Contacts protein L32.</text>
</comment>
<comment type="similarity">
    <text evidence="1">Belongs to the bacterial ribosomal protein bL17 family.</text>
</comment>
<sequence>MRHRKSGRQLNRNSSHRQAMFRNMASSLVSHEIIKTTLPKAKELRRVVEPLITLAKEDSVANRRLAFARTRNIETVAKLFNELGPRFAQRAGGYTRILKCGFRAGDNAPMAYIELVDRPETAAAVEE</sequence>
<keyword id="KW-0687">Ribonucleoprotein</keyword>
<keyword id="KW-0689">Ribosomal protein</keyword>
<name>RL17_MANSM</name>
<proteinExistence type="inferred from homology"/>
<organism>
    <name type="scientific">Mannheimia succiniciproducens (strain KCTC 0769BP / MBEL55E)</name>
    <dbReference type="NCBI Taxonomy" id="221988"/>
    <lineage>
        <taxon>Bacteria</taxon>
        <taxon>Pseudomonadati</taxon>
        <taxon>Pseudomonadota</taxon>
        <taxon>Gammaproteobacteria</taxon>
        <taxon>Pasteurellales</taxon>
        <taxon>Pasteurellaceae</taxon>
        <taxon>Basfia</taxon>
    </lineage>
</organism>
<accession>Q65QY1</accession>
<dbReference type="EMBL" id="AE016827">
    <property type="protein sequence ID" value="AAU38629.1"/>
    <property type="molecule type" value="Genomic_DNA"/>
</dbReference>
<dbReference type="RefSeq" id="WP_011201180.1">
    <property type="nucleotide sequence ID" value="NC_006300.1"/>
</dbReference>
<dbReference type="SMR" id="Q65QY1"/>
<dbReference type="STRING" id="221988.MS2022"/>
<dbReference type="KEGG" id="msu:MS2022"/>
<dbReference type="eggNOG" id="COG0203">
    <property type="taxonomic scope" value="Bacteria"/>
</dbReference>
<dbReference type="HOGENOM" id="CLU_074407_2_0_6"/>
<dbReference type="OrthoDB" id="9809073at2"/>
<dbReference type="Proteomes" id="UP000000607">
    <property type="component" value="Chromosome"/>
</dbReference>
<dbReference type="GO" id="GO:0022625">
    <property type="term" value="C:cytosolic large ribosomal subunit"/>
    <property type="evidence" value="ECO:0007669"/>
    <property type="project" value="TreeGrafter"/>
</dbReference>
<dbReference type="GO" id="GO:0003735">
    <property type="term" value="F:structural constituent of ribosome"/>
    <property type="evidence" value="ECO:0007669"/>
    <property type="project" value="InterPro"/>
</dbReference>
<dbReference type="GO" id="GO:0006412">
    <property type="term" value="P:translation"/>
    <property type="evidence" value="ECO:0007669"/>
    <property type="project" value="UniProtKB-UniRule"/>
</dbReference>
<dbReference type="FunFam" id="3.90.1030.10:FF:000001">
    <property type="entry name" value="50S ribosomal protein L17"/>
    <property type="match status" value="1"/>
</dbReference>
<dbReference type="Gene3D" id="3.90.1030.10">
    <property type="entry name" value="Ribosomal protein L17"/>
    <property type="match status" value="1"/>
</dbReference>
<dbReference type="HAMAP" id="MF_01368">
    <property type="entry name" value="Ribosomal_bL17"/>
    <property type="match status" value="1"/>
</dbReference>
<dbReference type="InterPro" id="IPR000456">
    <property type="entry name" value="Ribosomal_bL17"/>
</dbReference>
<dbReference type="InterPro" id="IPR047859">
    <property type="entry name" value="Ribosomal_bL17_CS"/>
</dbReference>
<dbReference type="InterPro" id="IPR036373">
    <property type="entry name" value="Ribosomal_bL17_sf"/>
</dbReference>
<dbReference type="NCBIfam" id="TIGR00059">
    <property type="entry name" value="L17"/>
    <property type="match status" value="1"/>
</dbReference>
<dbReference type="PANTHER" id="PTHR14413:SF16">
    <property type="entry name" value="LARGE RIBOSOMAL SUBUNIT PROTEIN BL17M"/>
    <property type="match status" value="1"/>
</dbReference>
<dbReference type="PANTHER" id="PTHR14413">
    <property type="entry name" value="RIBOSOMAL PROTEIN L17"/>
    <property type="match status" value="1"/>
</dbReference>
<dbReference type="Pfam" id="PF01196">
    <property type="entry name" value="Ribosomal_L17"/>
    <property type="match status" value="1"/>
</dbReference>
<dbReference type="SUPFAM" id="SSF64263">
    <property type="entry name" value="Prokaryotic ribosomal protein L17"/>
    <property type="match status" value="1"/>
</dbReference>
<dbReference type="PROSITE" id="PS01167">
    <property type="entry name" value="RIBOSOMAL_L17"/>
    <property type="match status" value="1"/>
</dbReference>
<reference key="1">
    <citation type="journal article" date="2004" name="Nat. Biotechnol.">
        <title>The genome sequence of the capnophilic rumen bacterium Mannheimia succiniciproducens.</title>
        <authorList>
            <person name="Hong S.H."/>
            <person name="Kim J.S."/>
            <person name="Lee S.Y."/>
            <person name="In Y.H."/>
            <person name="Choi S.S."/>
            <person name="Rih J.-K."/>
            <person name="Kim C.H."/>
            <person name="Jeong H."/>
            <person name="Hur C.G."/>
            <person name="Kim J.J."/>
        </authorList>
    </citation>
    <scope>NUCLEOTIDE SEQUENCE [LARGE SCALE GENOMIC DNA]</scope>
    <source>
        <strain>KCTC 0769BP / MBEL55E</strain>
    </source>
</reference>
<evidence type="ECO:0000255" key="1">
    <source>
        <dbReference type="HAMAP-Rule" id="MF_01368"/>
    </source>
</evidence>
<evidence type="ECO:0000305" key="2"/>
<protein>
    <recommendedName>
        <fullName evidence="1">Large ribosomal subunit protein bL17</fullName>
    </recommendedName>
    <alternativeName>
        <fullName evidence="2">50S ribosomal protein L17</fullName>
    </alternativeName>
</protein>
<feature type="chain" id="PRO_0000267890" description="Large ribosomal subunit protein bL17">
    <location>
        <begin position="1"/>
        <end position="127"/>
    </location>
</feature>
<gene>
    <name evidence="1" type="primary">rplQ</name>
    <name type="ordered locus">MS2022</name>
</gene>